<protein>
    <recommendedName>
        <fullName evidence="1">UPF0210 protein SEQ_0468</fullName>
    </recommendedName>
</protein>
<name>Y468_STRE4</name>
<gene>
    <name type="ordered locus">SEQ_0468</name>
</gene>
<dbReference type="EMBL" id="FM204883">
    <property type="protein sequence ID" value="CAW92664.1"/>
    <property type="molecule type" value="Genomic_DNA"/>
</dbReference>
<dbReference type="RefSeq" id="WP_012679070.1">
    <property type="nucleotide sequence ID" value="NC_012471.1"/>
</dbReference>
<dbReference type="SMR" id="C0M7F4"/>
<dbReference type="KEGG" id="seu:SEQ_0468"/>
<dbReference type="HOGENOM" id="CLU_048704_0_0_9"/>
<dbReference type="OrthoDB" id="9763001at2"/>
<dbReference type="Proteomes" id="UP000001365">
    <property type="component" value="Chromosome"/>
</dbReference>
<dbReference type="CDD" id="cd08025">
    <property type="entry name" value="RNR_PFL_like_DUF711"/>
    <property type="match status" value="1"/>
</dbReference>
<dbReference type="Gene3D" id="3.20.70.20">
    <property type="match status" value="1"/>
</dbReference>
<dbReference type="HAMAP" id="MF_01221">
    <property type="entry name" value="UPF0210"/>
    <property type="match status" value="1"/>
</dbReference>
<dbReference type="InterPro" id="IPR007841">
    <property type="entry name" value="UPF0210"/>
</dbReference>
<dbReference type="NCBIfam" id="NF003700">
    <property type="entry name" value="PRK05313.1"/>
    <property type="match status" value="1"/>
</dbReference>
<dbReference type="PANTHER" id="PTHR37560:SF1">
    <property type="entry name" value="UPF0210 PROTEIN MJ1665"/>
    <property type="match status" value="1"/>
</dbReference>
<dbReference type="PANTHER" id="PTHR37560">
    <property type="entry name" value="UPF0210 PROTEIN SPR0218"/>
    <property type="match status" value="1"/>
</dbReference>
<dbReference type="Pfam" id="PF05167">
    <property type="entry name" value="DUF711"/>
    <property type="match status" value="1"/>
</dbReference>
<dbReference type="SUPFAM" id="SSF51998">
    <property type="entry name" value="PFL-like glycyl radical enzymes"/>
    <property type="match status" value="1"/>
</dbReference>
<organism>
    <name type="scientific">Streptococcus equi subsp. equi (strain 4047)</name>
    <dbReference type="NCBI Taxonomy" id="553482"/>
    <lineage>
        <taxon>Bacteria</taxon>
        <taxon>Bacillati</taxon>
        <taxon>Bacillota</taxon>
        <taxon>Bacilli</taxon>
        <taxon>Lactobacillales</taxon>
        <taxon>Streptococcaceae</taxon>
        <taxon>Streptococcus</taxon>
    </lineage>
</organism>
<feature type="chain" id="PRO_1000164867" description="UPF0210 protein SEQ_0468">
    <location>
        <begin position="1"/>
        <end position="445"/>
    </location>
</feature>
<reference key="1">
    <citation type="journal article" date="2009" name="PLoS Pathog.">
        <title>Genomic evidence for the evolution of Streptococcus equi: host restriction, increased virulence, and genetic exchange with human pathogens.</title>
        <authorList>
            <person name="Holden M.T.G."/>
            <person name="Heather Z."/>
            <person name="Paillot R."/>
            <person name="Steward K.F."/>
            <person name="Webb K."/>
            <person name="Ainslie F."/>
            <person name="Jourdan T."/>
            <person name="Bason N.C."/>
            <person name="Holroyd N.E."/>
            <person name="Mungall K."/>
            <person name="Quail M.A."/>
            <person name="Sanders M."/>
            <person name="Simmonds M."/>
            <person name="Willey D."/>
            <person name="Brooks K."/>
            <person name="Aanensen D.M."/>
            <person name="Spratt B.G."/>
            <person name="Jolley K.A."/>
            <person name="Maiden M.C.J."/>
            <person name="Kehoe M."/>
            <person name="Chanter N."/>
            <person name="Bentley S.D."/>
            <person name="Robinson C."/>
            <person name="Maskell D.J."/>
            <person name="Parkhill J."/>
            <person name="Waller A.S."/>
        </authorList>
    </citation>
    <scope>NUCLEOTIDE SEQUENCE [LARGE SCALE GENOMIC DNA]</scope>
    <source>
        <strain>4047</strain>
    </source>
</reference>
<proteinExistence type="inferred from homology"/>
<sequence length="445" mass="46122">MDIRQVRETVEMIEEQHFDIRTITMGISLLDCIDSDIDRAAAKIYQKITTKAANLVAVGDDIAAELGIPIVNKRVSVTPIALIGAATDAEDYLSLAKALDQAACDIGVDFIGGFSALVQKGYQKGDKILIESIPQALAQTQKVCASVNVGSTRSGINMTAVADMGRIIKETAKASEIGAAKLVVFANAVEDNPFMAGAFHGVGEADTVINVGVSGPGVVKRALEKVRGESFDVLAETVKKTAFKITRIGQLVGQMASERLGVGFGVVDLSLAPTPAVGDSVARVLEEMGLEIVGTHGTTAALALLNDAVKKGGVMACNRVGGLSGAFIPVSEDEGMIAAVQGGSLNLEKLEAMTAICSVGLDMIAIPEETPSETIAAMIADEAAIGVINQKTTAVRIIPKGKEGDMIAFGGLLGTAPVMAVNPHSSADFIARGGQIPAPIHSFKN</sequence>
<evidence type="ECO:0000255" key="1">
    <source>
        <dbReference type="HAMAP-Rule" id="MF_01221"/>
    </source>
</evidence>
<comment type="subunit">
    <text evidence="1">Homodimer.</text>
</comment>
<comment type="similarity">
    <text evidence="1">Belongs to the UPF0210 family.</text>
</comment>
<accession>C0M7F4</accession>